<organism>
    <name type="scientific">Macaca fascicularis</name>
    <name type="common">Crab-eating macaque</name>
    <name type="synonym">Cynomolgus monkey</name>
    <dbReference type="NCBI Taxonomy" id="9541"/>
    <lineage>
        <taxon>Eukaryota</taxon>
        <taxon>Metazoa</taxon>
        <taxon>Chordata</taxon>
        <taxon>Craniata</taxon>
        <taxon>Vertebrata</taxon>
        <taxon>Euteleostomi</taxon>
        <taxon>Mammalia</taxon>
        <taxon>Eutheria</taxon>
        <taxon>Euarchontoglires</taxon>
        <taxon>Primates</taxon>
        <taxon>Haplorrhini</taxon>
        <taxon>Catarrhini</taxon>
        <taxon>Cercopithecidae</taxon>
        <taxon>Cercopithecinae</taxon>
        <taxon>Macaca</taxon>
    </lineage>
</organism>
<comment type="function">
    <text evidence="1">In T-helper 2 (Th2) cells, regulates the magnitude of NFAT-driven transcription of a specific subset of cytokine genes, including IL3, IL4, IL5 and IL13, but not IL2. Recruits PRMT1 to the IL4 promoter; this leads to enhancement of histone H4 'Arg-3'-methylation and facilitates subsequent histone acetylation at the IL4 locus, thus promotes robust cytokine expression (By similarity). Down-regulates formation of poly-SUMO chains by UBE2I/UBC9 (By similarity).</text>
</comment>
<comment type="subunit">
    <text evidence="1">Interacts with NFATC2, TRAF1, TRAF2 and PRMT1. Interacts with UBE2I/UBC9 (By similarity).</text>
</comment>
<comment type="subcellular location">
    <subcellularLocation>
        <location evidence="1">Nucleus</location>
    </subcellularLocation>
    <subcellularLocation>
        <location evidence="1">Cytoplasm</location>
    </subcellularLocation>
    <text evidence="1">TRAF1 is associated with a fraction of NFATC2IP in the cytoplasm and prevents its translocation to the nucleus.</text>
</comment>
<comment type="PTM">
    <text evidence="1">Methylation at the N-terminus by PRMT1 modulates interaction with the NFAT complex and results in augmented cytokine production.</text>
</comment>
<reference key="1">
    <citation type="submission" date="2000-10" db="EMBL/GenBank/DDBJ databases">
        <title>DNA sequences of macaque genes expressed in brain or testis and its evolutionary implications.</title>
        <authorList>
            <consortium name="International consortium for macaque cDNA sequencing and analysis"/>
        </authorList>
    </citation>
    <scope>NUCLEOTIDE SEQUENCE [LARGE SCALE MRNA]</scope>
    <source>
        <tissue>Parietal cortex</tissue>
    </source>
</reference>
<evidence type="ECO:0000250" key="1"/>
<evidence type="ECO:0000250" key="2">
    <source>
        <dbReference type="UniProtKB" id="O09130"/>
    </source>
</evidence>
<evidence type="ECO:0000250" key="3">
    <source>
        <dbReference type="UniProtKB" id="Q6AYG7"/>
    </source>
</evidence>
<evidence type="ECO:0000250" key="4">
    <source>
        <dbReference type="UniProtKB" id="Q8NCF5"/>
    </source>
</evidence>
<evidence type="ECO:0000255" key="5"/>
<evidence type="ECO:0000255" key="6">
    <source>
        <dbReference type="PROSITE-ProRule" id="PRU00214"/>
    </source>
</evidence>
<evidence type="ECO:0000256" key="7">
    <source>
        <dbReference type="SAM" id="MobiDB-lite"/>
    </source>
</evidence>
<feature type="chain" id="PRO_0000281010" description="NFATC2-interacting protein">
    <location>
        <begin position="1"/>
        <end position="408"/>
    </location>
</feature>
<feature type="domain" description="Ubiquitin-like" evidence="6">
    <location>
        <begin position="337"/>
        <end position="408"/>
    </location>
</feature>
<feature type="region of interest" description="Disordered" evidence="7">
    <location>
        <begin position="1"/>
        <end position="113"/>
    </location>
</feature>
<feature type="region of interest" description="Disordered" evidence="7">
    <location>
        <begin position="141"/>
        <end position="205"/>
    </location>
</feature>
<feature type="coiled-coil region" evidence="5">
    <location>
        <begin position="197"/>
        <end position="220"/>
    </location>
</feature>
<feature type="compositionally biased region" description="Low complexity" evidence="7">
    <location>
        <begin position="24"/>
        <end position="40"/>
    </location>
</feature>
<feature type="compositionally biased region" description="Basic and acidic residues" evidence="7">
    <location>
        <begin position="169"/>
        <end position="181"/>
    </location>
</feature>
<feature type="compositionally biased region" description="Basic residues" evidence="7">
    <location>
        <begin position="196"/>
        <end position="205"/>
    </location>
</feature>
<feature type="modified residue" description="Phosphoserine" evidence="3">
    <location>
        <position position="41"/>
    </location>
</feature>
<feature type="modified residue" description="Phosphoserine" evidence="3">
    <location>
        <position position="43"/>
    </location>
</feature>
<feature type="modified residue" description="Phosphoserine" evidence="4">
    <location>
        <position position="73"/>
    </location>
</feature>
<feature type="modified residue" description="Phosphoserine" evidence="2">
    <location>
        <position position="77"/>
    </location>
</feature>
<feature type="modified residue" description="Phosphoserine" evidence="2">
    <location>
        <position position="79"/>
    </location>
</feature>
<feature type="modified residue" description="Phosphoserine" evidence="2">
    <location>
        <position position="81"/>
    </location>
</feature>
<feature type="modified residue" description="Phosphoserine" evidence="4">
    <location>
        <position position="116"/>
    </location>
</feature>
<feature type="modified residue" description="Phosphoserine" evidence="4">
    <location>
        <position position="187"/>
    </location>
</feature>
<feature type="modified residue" description="Phosphoserine" evidence="4">
    <location>
        <position position="190"/>
    </location>
</feature>
<feature type="modified residue" description="Phosphoserine" evidence="4">
    <location>
        <position position="193"/>
    </location>
</feature>
<feature type="modified residue" description="Phosphoserine" evidence="4">
    <location>
        <position position="209"/>
    </location>
</feature>
<feature type="modified residue" description="Phosphoserine" evidence="4">
    <location>
        <position position="303"/>
    </location>
</feature>
<feature type="modified residue" description="Phosphothreonine" evidence="4">
    <location>
        <position position="305"/>
    </location>
</feature>
<feature type="modified residue" description="Phosphothreonine" evidence="4">
    <location>
        <position position="307"/>
    </location>
</feature>
<feature type="modified residue" description="Phosphoserine" evidence="4">
    <location>
        <position position="358"/>
    </location>
</feature>
<feature type="modified residue" description="Phosphoserine" evidence="4">
    <location>
        <position position="379"/>
    </location>
</feature>
<feature type="cross-link" description="Glycyl lysine isopeptide (Lys-Gly) (interchain with G-Cter in SUMO2)" evidence="4">
    <location>
        <position position="118"/>
    </location>
</feature>
<feature type="cross-link" description="Glycyl lysine isopeptide (Lys-Gly) (interchain with G-Cter in SUMO2)" evidence="4">
    <location>
        <position position="120"/>
    </location>
</feature>
<dbReference type="EMBL" id="AB050511">
    <property type="protein sequence ID" value="BAB17279.1"/>
    <property type="molecule type" value="mRNA"/>
</dbReference>
<dbReference type="RefSeq" id="NP_001306469.1">
    <property type="nucleotide sequence ID" value="NM_001319540.1"/>
</dbReference>
<dbReference type="BMRB" id="Q9GLZ9"/>
<dbReference type="SMR" id="Q9GLZ9"/>
<dbReference type="STRING" id="9541.ENSMFAP00000013443"/>
<dbReference type="eggNOG" id="KOG1769">
    <property type="taxonomic scope" value="Eukaryota"/>
</dbReference>
<dbReference type="Proteomes" id="UP000233100">
    <property type="component" value="Unplaced"/>
</dbReference>
<dbReference type="GO" id="GO:0005737">
    <property type="term" value="C:cytoplasm"/>
    <property type="evidence" value="ECO:0007669"/>
    <property type="project" value="UniProtKB-SubCell"/>
</dbReference>
<dbReference type="GO" id="GO:0005634">
    <property type="term" value="C:nucleus"/>
    <property type="evidence" value="ECO:0007669"/>
    <property type="project" value="UniProtKB-SubCell"/>
</dbReference>
<dbReference type="GO" id="GO:0045944">
    <property type="term" value="P:positive regulation of transcription by RNA polymerase II"/>
    <property type="evidence" value="ECO:0007669"/>
    <property type="project" value="TreeGrafter"/>
</dbReference>
<dbReference type="GO" id="GO:0016925">
    <property type="term" value="P:protein sumoylation"/>
    <property type="evidence" value="ECO:0007669"/>
    <property type="project" value="UniProtKB-ARBA"/>
</dbReference>
<dbReference type="CDD" id="cd17078">
    <property type="entry name" value="Ubl_SLD1_NFATC2ip"/>
    <property type="match status" value="1"/>
</dbReference>
<dbReference type="CDD" id="cd17079">
    <property type="entry name" value="Ubl_SLD2_NFATC2ip"/>
    <property type="match status" value="1"/>
</dbReference>
<dbReference type="Gene3D" id="3.10.20.90">
    <property type="entry name" value="Phosphatidylinositol 3-kinase Catalytic Subunit, Chain A, domain 1"/>
    <property type="match status" value="2"/>
</dbReference>
<dbReference type="InterPro" id="IPR052324">
    <property type="entry name" value="NFATC2-Int_DNA_Repair"/>
</dbReference>
<dbReference type="InterPro" id="IPR022617">
    <property type="entry name" value="Rad60/SUMO-like_dom"/>
</dbReference>
<dbReference type="InterPro" id="IPR000626">
    <property type="entry name" value="Ubiquitin-like_dom"/>
</dbReference>
<dbReference type="InterPro" id="IPR029071">
    <property type="entry name" value="Ubiquitin-like_domsf"/>
</dbReference>
<dbReference type="PANTHER" id="PTHR47187">
    <property type="entry name" value="NFATC2-INTERACTING PROTEIN"/>
    <property type="match status" value="1"/>
</dbReference>
<dbReference type="PANTHER" id="PTHR47187:SF1">
    <property type="entry name" value="NFATC2-INTERACTING PROTEIN"/>
    <property type="match status" value="1"/>
</dbReference>
<dbReference type="Pfam" id="PF11976">
    <property type="entry name" value="Rad60-SLD"/>
    <property type="match status" value="1"/>
</dbReference>
<dbReference type="SMART" id="SM00213">
    <property type="entry name" value="UBQ"/>
    <property type="match status" value="2"/>
</dbReference>
<dbReference type="SUPFAM" id="SSF54236">
    <property type="entry name" value="Ubiquitin-like"/>
    <property type="match status" value="2"/>
</dbReference>
<dbReference type="PROSITE" id="PS50053">
    <property type="entry name" value="UBIQUITIN_2"/>
    <property type="match status" value="1"/>
</dbReference>
<keyword id="KW-0175">Coiled coil</keyword>
<keyword id="KW-0963">Cytoplasm</keyword>
<keyword id="KW-1017">Isopeptide bond</keyword>
<keyword id="KW-0488">Methylation</keyword>
<keyword id="KW-0539">Nucleus</keyword>
<keyword id="KW-0597">Phosphoprotein</keyword>
<keyword id="KW-1185">Reference proteome</keyword>
<keyword id="KW-0832">Ubl conjugation</keyword>
<accession>Q9GLZ9</accession>
<proteinExistence type="evidence at transcript level"/>
<name>NF2IP_MACFA</name>
<gene>
    <name type="primary">NFATC2IP</name>
    <name type="ORF">QnpA-16750</name>
</gene>
<sequence>MAEPVGKRGRLSRGSGAGRRPRAQRSPSRGTLDVVSVDLVSDSDEEIVEVTSARCAADEVEVAPSEPPGPVASRDDSDSDSEGADARPAGPPREPVRRRRRLVLDPGEAPLVPVYSGKVKSSLCLIPDDLSLLKLYPPGDEEEVELADSSGLYHEGSPSPGSPWKTKLRTKDKEEKKKTEILDLDNSPLSPPSPRTKSRKHTRALKKLSEVNKRLQDLRSCLSPEPPQGQEQQGQEDEVVLVEGPTLPETPRLFPLKIRCRADLVRLPLRMSEPLQSVVDHMATHLGVSPSRILLLFGETELSPTATPRTLKLGVADIIDCVVLASSPEATETSRQLQLRVQGKEKHQTLEVSLSRDSPLKTLMSHYEEAMGLSGRKLSFFFDGTKLSGRELPADLGMESGDLIEVWG</sequence>
<protein>
    <recommendedName>
        <fullName>NFATC2-interacting protein</fullName>
    </recommendedName>
    <alternativeName>
        <fullName>Nuclear factor of activated T-cells, cytoplasmic 2-interacting protein</fullName>
    </alternativeName>
</protein>